<name>TSAD_KINRD</name>
<evidence type="ECO:0000255" key="1">
    <source>
        <dbReference type="HAMAP-Rule" id="MF_01445"/>
    </source>
</evidence>
<organism>
    <name type="scientific">Kineococcus radiotolerans (strain ATCC BAA-149 / DSM 14245 / SRS30216)</name>
    <dbReference type="NCBI Taxonomy" id="266940"/>
    <lineage>
        <taxon>Bacteria</taxon>
        <taxon>Bacillati</taxon>
        <taxon>Actinomycetota</taxon>
        <taxon>Actinomycetes</taxon>
        <taxon>Kineosporiales</taxon>
        <taxon>Kineosporiaceae</taxon>
        <taxon>Kineococcus</taxon>
    </lineage>
</organism>
<gene>
    <name evidence="1" type="primary">tsaD</name>
    <name type="synonym">gcp</name>
    <name type="ordered locus">Krad_0403</name>
</gene>
<protein>
    <recommendedName>
        <fullName evidence="1">tRNA N6-adenosine threonylcarbamoyltransferase</fullName>
        <ecNumber evidence="1">2.3.1.234</ecNumber>
    </recommendedName>
    <alternativeName>
        <fullName evidence="1">N6-L-threonylcarbamoyladenine synthase</fullName>
        <shortName evidence="1">t(6)A synthase</shortName>
    </alternativeName>
    <alternativeName>
        <fullName evidence="1">t(6)A37 threonylcarbamoyladenosine biosynthesis protein TsaD</fullName>
    </alternativeName>
    <alternativeName>
        <fullName evidence="1">tRNA threonylcarbamoyladenosine biosynthesis protein TsaD</fullName>
    </alternativeName>
</protein>
<reference key="1">
    <citation type="journal article" date="2008" name="PLoS ONE">
        <title>Survival in nuclear waste, extreme resistance, and potential applications gleaned from the genome sequence of Kineococcus radiotolerans SRS30216.</title>
        <authorList>
            <person name="Bagwell C.E."/>
            <person name="Bhat S."/>
            <person name="Hawkins G.M."/>
            <person name="Smith B.W."/>
            <person name="Biswas T."/>
            <person name="Hoover T.R."/>
            <person name="Saunders E."/>
            <person name="Han C.S."/>
            <person name="Tsodikov O.V."/>
            <person name="Shimkets L.J."/>
        </authorList>
    </citation>
    <scope>NUCLEOTIDE SEQUENCE [LARGE SCALE GENOMIC DNA]</scope>
    <source>
        <strain>ATCC BAA-149 / DSM 14245 / SRS30216</strain>
    </source>
</reference>
<keyword id="KW-0012">Acyltransferase</keyword>
<keyword id="KW-0963">Cytoplasm</keyword>
<keyword id="KW-0408">Iron</keyword>
<keyword id="KW-0479">Metal-binding</keyword>
<keyword id="KW-1185">Reference proteome</keyword>
<keyword id="KW-0808">Transferase</keyword>
<keyword id="KW-0819">tRNA processing</keyword>
<proteinExistence type="inferred from homology"/>
<comment type="function">
    <text evidence="1">Required for the formation of a threonylcarbamoyl group on adenosine at position 37 (t(6)A37) in tRNAs that read codons beginning with adenine. Is involved in the transfer of the threonylcarbamoyl moiety of threonylcarbamoyl-AMP (TC-AMP) to the N6 group of A37, together with TsaE and TsaB. TsaD likely plays a direct catalytic role in this reaction.</text>
</comment>
<comment type="catalytic activity">
    <reaction evidence="1">
        <text>L-threonylcarbamoyladenylate + adenosine(37) in tRNA = N(6)-L-threonylcarbamoyladenosine(37) in tRNA + AMP + H(+)</text>
        <dbReference type="Rhea" id="RHEA:37059"/>
        <dbReference type="Rhea" id="RHEA-COMP:10162"/>
        <dbReference type="Rhea" id="RHEA-COMP:10163"/>
        <dbReference type="ChEBI" id="CHEBI:15378"/>
        <dbReference type="ChEBI" id="CHEBI:73682"/>
        <dbReference type="ChEBI" id="CHEBI:74411"/>
        <dbReference type="ChEBI" id="CHEBI:74418"/>
        <dbReference type="ChEBI" id="CHEBI:456215"/>
        <dbReference type="EC" id="2.3.1.234"/>
    </reaction>
</comment>
<comment type="cofactor">
    <cofactor evidence="1">
        <name>Fe(2+)</name>
        <dbReference type="ChEBI" id="CHEBI:29033"/>
    </cofactor>
    <text evidence="1">Binds 1 Fe(2+) ion per subunit.</text>
</comment>
<comment type="subcellular location">
    <subcellularLocation>
        <location evidence="1">Cytoplasm</location>
    </subcellularLocation>
</comment>
<comment type="similarity">
    <text evidence="1">Belongs to the KAE1 / TsaD family.</text>
</comment>
<dbReference type="EC" id="2.3.1.234" evidence="1"/>
<dbReference type="EMBL" id="CP000750">
    <property type="protein sequence ID" value="ABS01893.1"/>
    <property type="molecule type" value="Genomic_DNA"/>
</dbReference>
<dbReference type="RefSeq" id="WP_012085279.1">
    <property type="nucleotide sequence ID" value="NC_009664.2"/>
</dbReference>
<dbReference type="SMR" id="A6W504"/>
<dbReference type="STRING" id="266940.Krad_0403"/>
<dbReference type="KEGG" id="kra:Krad_0403"/>
<dbReference type="eggNOG" id="COG0533">
    <property type="taxonomic scope" value="Bacteria"/>
</dbReference>
<dbReference type="HOGENOM" id="CLU_023208_0_2_11"/>
<dbReference type="OrthoDB" id="9806197at2"/>
<dbReference type="Proteomes" id="UP000001116">
    <property type="component" value="Chromosome"/>
</dbReference>
<dbReference type="GO" id="GO:0005737">
    <property type="term" value="C:cytoplasm"/>
    <property type="evidence" value="ECO:0007669"/>
    <property type="project" value="UniProtKB-SubCell"/>
</dbReference>
<dbReference type="GO" id="GO:0005506">
    <property type="term" value="F:iron ion binding"/>
    <property type="evidence" value="ECO:0007669"/>
    <property type="project" value="UniProtKB-UniRule"/>
</dbReference>
<dbReference type="GO" id="GO:0061711">
    <property type="term" value="F:N(6)-L-threonylcarbamoyladenine synthase activity"/>
    <property type="evidence" value="ECO:0007669"/>
    <property type="project" value="UniProtKB-EC"/>
</dbReference>
<dbReference type="GO" id="GO:0002949">
    <property type="term" value="P:tRNA threonylcarbamoyladenosine modification"/>
    <property type="evidence" value="ECO:0007669"/>
    <property type="project" value="UniProtKB-UniRule"/>
</dbReference>
<dbReference type="CDD" id="cd24133">
    <property type="entry name" value="ASKHA_NBD_TsaD_bac"/>
    <property type="match status" value="1"/>
</dbReference>
<dbReference type="FunFam" id="3.30.420.40:FF:000012">
    <property type="entry name" value="tRNA N6-adenosine threonylcarbamoyltransferase"/>
    <property type="match status" value="1"/>
</dbReference>
<dbReference type="FunFam" id="3.30.420.40:FF:000040">
    <property type="entry name" value="tRNA N6-adenosine threonylcarbamoyltransferase"/>
    <property type="match status" value="1"/>
</dbReference>
<dbReference type="Gene3D" id="3.30.420.40">
    <property type="match status" value="2"/>
</dbReference>
<dbReference type="HAMAP" id="MF_01445">
    <property type="entry name" value="TsaD"/>
    <property type="match status" value="1"/>
</dbReference>
<dbReference type="InterPro" id="IPR043129">
    <property type="entry name" value="ATPase_NBD"/>
</dbReference>
<dbReference type="InterPro" id="IPR000905">
    <property type="entry name" value="Gcp-like_dom"/>
</dbReference>
<dbReference type="InterPro" id="IPR017861">
    <property type="entry name" value="KAE1/TsaD"/>
</dbReference>
<dbReference type="InterPro" id="IPR017860">
    <property type="entry name" value="Peptidase_M22_CS"/>
</dbReference>
<dbReference type="InterPro" id="IPR022450">
    <property type="entry name" value="TsaD"/>
</dbReference>
<dbReference type="NCBIfam" id="TIGR00329">
    <property type="entry name" value="gcp_kae1"/>
    <property type="match status" value="1"/>
</dbReference>
<dbReference type="NCBIfam" id="TIGR03723">
    <property type="entry name" value="T6A_TsaD_YgjD"/>
    <property type="match status" value="1"/>
</dbReference>
<dbReference type="PANTHER" id="PTHR11735">
    <property type="entry name" value="TRNA N6-ADENOSINE THREONYLCARBAMOYLTRANSFERASE"/>
    <property type="match status" value="1"/>
</dbReference>
<dbReference type="PANTHER" id="PTHR11735:SF6">
    <property type="entry name" value="TRNA N6-ADENOSINE THREONYLCARBAMOYLTRANSFERASE, MITOCHONDRIAL"/>
    <property type="match status" value="1"/>
</dbReference>
<dbReference type="Pfam" id="PF00814">
    <property type="entry name" value="TsaD"/>
    <property type="match status" value="1"/>
</dbReference>
<dbReference type="PRINTS" id="PR00789">
    <property type="entry name" value="OSIALOPTASE"/>
</dbReference>
<dbReference type="SUPFAM" id="SSF53067">
    <property type="entry name" value="Actin-like ATPase domain"/>
    <property type="match status" value="1"/>
</dbReference>
<dbReference type="PROSITE" id="PS01016">
    <property type="entry name" value="GLYCOPROTEASE"/>
    <property type="match status" value="1"/>
</dbReference>
<feature type="chain" id="PRO_1000087478" description="tRNA N6-adenosine threonylcarbamoyltransferase">
    <location>
        <begin position="1"/>
        <end position="347"/>
    </location>
</feature>
<feature type="binding site" evidence="1">
    <location>
        <position position="110"/>
    </location>
    <ligand>
        <name>Fe cation</name>
        <dbReference type="ChEBI" id="CHEBI:24875"/>
    </ligand>
</feature>
<feature type="binding site" evidence="1">
    <location>
        <position position="114"/>
    </location>
    <ligand>
        <name>Fe cation</name>
        <dbReference type="ChEBI" id="CHEBI:24875"/>
    </ligand>
</feature>
<feature type="binding site" evidence="1">
    <location>
        <begin position="133"/>
        <end position="137"/>
    </location>
    <ligand>
        <name>substrate</name>
    </ligand>
</feature>
<feature type="binding site" evidence="1">
    <location>
        <position position="168"/>
    </location>
    <ligand>
        <name>substrate</name>
    </ligand>
</feature>
<feature type="binding site" evidence="1">
    <location>
        <position position="181"/>
    </location>
    <ligand>
        <name>substrate</name>
    </ligand>
</feature>
<feature type="binding site" evidence="1">
    <location>
        <position position="185"/>
    </location>
    <ligand>
        <name>substrate</name>
    </ligand>
</feature>
<feature type="binding site" evidence="1">
    <location>
        <position position="277"/>
    </location>
    <ligand>
        <name>substrate</name>
    </ligand>
</feature>
<feature type="binding site" evidence="1">
    <location>
        <position position="305"/>
    </location>
    <ligand>
        <name>Fe cation</name>
        <dbReference type="ChEBI" id="CHEBI:24875"/>
    </ligand>
</feature>
<accession>A6W504</accession>
<sequence>MIVLGVESSCDETGVGLVSEGVLLGDALASSMDAHARFGGVVPEVAARAHLEAIVPVMHEALGKAGLDLADVDAVAVTAGPGLSTAVQVGLASAKALAFALGKPLYGVHHLAGHAAVDVLEHGPLPRRCVALVVSGGHTSLLLLGDLARDPIVHLGDTIDDAAGEAFDKVARVLGLGYPGGPSIDRAARDGDPRAIAFPRALSRAQDPAYGFSFSGVKTAVARWVEARQDAGGEVPVADVAASFQEAVADVLTRKAVAACREHGVDALLLVGGVAANTRVRALAEQRCAAAGLELRVPPIRLCTDNGAMIAAVGDLLVRAGAPASGLDLGADPSAPLTGALLAGPWS</sequence>